<gene>
    <name evidence="1" type="primary">mscL</name>
    <name type="ordered locus">ETA_31320</name>
</gene>
<proteinExistence type="inferred from homology"/>
<accession>B2VK97</accession>
<name>MSCL_ERWT9</name>
<reference key="1">
    <citation type="journal article" date="2008" name="Environ. Microbiol.">
        <title>The genome of Erwinia tasmaniensis strain Et1/99, a non-pathogenic bacterium in the genus Erwinia.</title>
        <authorList>
            <person name="Kube M."/>
            <person name="Migdoll A.M."/>
            <person name="Mueller I."/>
            <person name="Kuhl H."/>
            <person name="Beck A."/>
            <person name="Reinhardt R."/>
            <person name="Geider K."/>
        </authorList>
    </citation>
    <scope>NUCLEOTIDE SEQUENCE [LARGE SCALE GENOMIC DNA]</scope>
    <source>
        <strain>DSM 17950 / CFBP 7177 / CIP 109463 / NCPPB 4357 / Et1/99</strain>
    </source>
</reference>
<comment type="function">
    <text evidence="1">Channel that opens in response to stretch forces in the membrane lipid bilayer. May participate in the regulation of osmotic pressure changes within the cell.</text>
</comment>
<comment type="subunit">
    <text evidence="1">Homopentamer.</text>
</comment>
<comment type="subcellular location">
    <subcellularLocation>
        <location evidence="1">Cell inner membrane</location>
        <topology evidence="1">Multi-pass membrane protein</topology>
    </subcellularLocation>
</comment>
<comment type="similarity">
    <text evidence="1">Belongs to the MscL family.</text>
</comment>
<protein>
    <recommendedName>
        <fullName evidence="1">Large-conductance mechanosensitive channel</fullName>
    </recommendedName>
</protein>
<organism>
    <name type="scientific">Erwinia tasmaniensis (strain DSM 17950 / CFBP 7177 / CIP 109463 / NCPPB 4357 / Et1/99)</name>
    <dbReference type="NCBI Taxonomy" id="465817"/>
    <lineage>
        <taxon>Bacteria</taxon>
        <taxon>Pseudomonadati</taxon>
        <taxon>Pseudomonadota</taxon>
        <taxon>Gammaproteobacteria</taxon>
        <taxon>Enterobacterales</taxon>
        <taxon>Erwiniaceae</taxon>
        <taxon>Erwinia</taxon>
    </lineage>
</organism>
<sequence length="137" mass="15043">MSMFKEFRDFAMRGNVVDLAVGVIIGAAFGKIVSSLVANIIMPPLGLLIGGVDFKQFSWILKPADGAAPAVVMEYGVFLQTVFDFVIVAFAIFMAIKLMNRLYTKKEVEKPVAKPSAEETLLSEIRDLLKEQNGKAQ</sequence>
<evidence type="ECO:0000255" key="1">
    <source>
        <dbReference type="HAMAP-Rule" id="MF_00115"/>
    </source>
</evidence>
<feature type="chain" id="PRO_1000094894" description="Large-conductance mechanosensitive channel">
    <location>
        <begin position="1"/>
        <end position="137"/>
    </location>
</feature>
<feature type="transmembrane region" description="Helical" evidence="1">
    <location>
        <begin position="10"/>
        <end position="30"/>
    </location>
</feature>
<feature type="transmembrane region" description="Helical" evidence="1">
    <location>
        <begin position="76"/>
        <end position="96"/>
    </location>
</feature>
<dbReference type="EMBL" id="CU468135">
    <property type="protein sequence ID" value="CAO98178.1"/>
    <property type="molecule type" value="Genomic_DNA"/>
</dbReference>
<dbReference type="RefSeq" id="WP_012442826.1">
    <property type="nucleotide sequence ID" value="NC_010694.1"/>
</dbReference>
<dbReference type="SMR" id="B2VK97"/>
<dbReference type="STRING" id="465817.ETA_31320"/>
<dbReference type="KEGG" id="eta:ETA_31320"/>
<dbReference type="eggNOG" id="COG1970">
    <property type="taxonomic scope" value="Bacteria"/>
</dbReference>
<dbReference type="HOGENOM" id="CLU_095787_0_0_6"/>
<dbReference type="OrthoDB" id="9810350at2"/>
<dbReference type="Proteomes" id="UP000001726">
    <property type="component" value="Chromosome"/>
</dbReference>
<dbReference type="GO" id="GO:0005886">
    <property type="term" value="C:plasma membrane"/>
    <property type="evidence" value="ECO:0007669"/>
    <property type="project" value="UniProtKB-SubCell"/>
</dbReference>
<dbReference type="GO" id="GO:0008381">
    <property type="term" value="F:mechanosensitive monoatomic ion channel activity"/>
    <property type="evidence" value="ECO:0007669"/>
    <property type="project" value="UniProtKB-UniRule"/>
</dbReference>
<dbReference type="FunFam" id="1.10.1200.120:FF:000001">
    <property type="entry name" value="Large-conductance mechanosensitive channel"/>
    <property type="match status" value="1"/>
</dbReference>
<dbReference type="Gene3D" id="1.10.1200.120">
    <property type="entry name" value="Large-conductance mechanosensitive channel, MscL, domain 1"/>
    <property type="match status" value="1"/>
</dbReference>
<dbReference type="HAMAP" id="MF_00115">
    <property type="entry name" value="MscL"/>
    <property type="match status" value="1"/>
</dbReference>
<dbReference type="InterPro" id="IPR019823">
    <property type="entry name" value="Mechanosensitive_channel_CS"/>
</dbReference>
<dbReference type="InterPro" id="IPR001185">
    <property type="entry name" value="MS_channel"/>
</dbReference>
<dbReference type="InterPro" id="IPR037673">
    <property type="entry name" value="MSC/AndL"/>
</dbReference>
<dbReference type="InterPro" id="IPR036019">
    <property type="entry name" value="MscL_channel"/>
</dbReference>
<dbReference type="NCBIfam" id="TIGR00220">
    <property type="entry name" value="mscL"/>
    <property type="match status" value="1"/>
</dbReference>
<dbReference type="NCBIfam" id="NF001841">
    <property type="entry name" value="PRK00567.1-1"/>
    <property type="match status" value="1"/>
</dbReference>
<dbReference type="NCBIfam" id="NF001843">
    <property type="entry name" value="PRK00567.1-4"/>
    <property type="match status" value="1"/>
</dbReference>
<dbReference type="PANTHER" id="PTHR30266:SF2">
    <property type="entry name" value="LARGE-CONDUCTANCE MECHANOSENSITIVE CHANNEL"/>
    <property type="match status" value="1"/>
</dbReference>
<dbReference type="PANTHER" id="PTHR30266">
    <property type="entry name" value="MECHANOSENSITIVE CHANNEL MSCL"/>
    <property type="match status" value="1"/>
</dbReference>
<dbReference type="Pfam" id="PF01741">
    <property type="entry name" value="MscL"/>
    <property type="match status" value="1"/>
</dbReference>
<dbReference type="PRINTS" id="PR01264">
    <property type="entry name" value="MECHCHANNEL"/>
</dbReference>
<dbReference type="SUPFAM" id="SSF81330">
    <property type="entry name" value="Gated mechanosensitive channel"/>
    <property type="match status" value="1"/>
</dbReference>
<dbReference type="PROSITE" id="PS01327">
    <property type="entry name" value="MSCL"/>
    <property type="match status" value="1"/>
</dbReference>
<keyword id="KW-0997">Cell inner membrane</keyword>
<keyword id="KW-1003">Cell membrane</keyword>
<keyword id="KW-0407">Ion channel</keyword>
<keyword id="KW-0406">Ion transport</keyword>
<keyword id="KW-0472">Membrane</keyword>
<keyword id="KW-1185">Reference proteome</keyword>
<keyword id="KW-0812">Transmembrane</keyword>
<keyword id="KW-1133">Transmembrane helix</keyword>
<keyword id="KW-0813">Transport</keyword>